<sequence>MKKSQREDIFKKMSEEMDNITAEEIIDKHLQKDLDAEENQNVAKTLRGKVREKLKISKINKGEKSSTEQLIDSEIHQRSKLSPQTEVSLDESLSFFILSGEEGSALGKSSEQRPVNRSYPKCFSLGVNLQNVAESEEEEFMKEFILTDILKVKAADYEDDQEQIKKQKANIFVPSSSPVVNQRKLPKDMMPRILEDEGFYIQRKPEIYKKTCNKMENRLLKLEEGKCWFGESGEIMSLPTPIKQSWNFRLNVRKEPLNPLLKTIYRKAVKYDLGSSFMNKMEGSREIYQLDLNIVGLQFSHHHLFNQEQVLCARLLQLYECFQDRQQQNVSQLLYEKLKALTDATKLSNENSEINQLTRKSLQDYYWQISNTKQMYDLERGKDLSLLHSILRTWKQIKSLRHGQGFTSTPIKLQVQRIKMNKCDEQEQISEMSETEKKNEGKELKNGKKLESLSYLASDETEIERIKPITLRPQLSFTAELTSLSKCSLHEQKRRAKIQKLKYFIKIFYNNKQVSCTSVSPLQFDFKVMFQQIFNIQLMYWPEVICLEVYEKSKRTSLLAKLYIPLPNYTELKGKTALQYVEFSSDKLVMPADGEVGSNVPFLLEGNGTEELCLLTSGKLSYSLSWSLDENGLPLIPMPQSLRSSYCSMLRNVDARSVPGIPWLMNEQKLFEWANEVRIDPNNPEYSDLMESVTYMRLKGQDIPKYFRLEQLQDEFNFVSEEEMAKSKRFQLLQLRNAGQLDNFLLQQMPLHDTEIPDLVFQEYESQKEKEVSVSDVNSITAQRINSANFLKKVRRLIMKRIVKISKCNLSDIVNDYEEIVSTSQLTDAVCKFVEPRRKLKPQRKERKKVTAQAISDGDIKILVRIVRAYNIPTRKTTINGSLDMPTCLKSSISCLRHRETIKSVASDETLHEDTVHPFVEVSFQHTVYKTNTASGSHPCWNEEIKVDFVSPGHDYSFSSLSKIKDNIYINIFDEMMTEKHEDHCLKSCSGHSYIRKNWLGCIVFPFSALLQQSEISGTFQVTIPPVLLGYTWSNTYVFPKEDSNEQNLKECTFLNIFATIEPQISYVTCNPTLDKFLDQTEVLQRAQIFKKNCKAMFPNRRIVTTVFNDEGIQFLVTRYIKALNPPQQLLDIFLHNSNATFDLIARFVSLIPFVPNTPDENDGSDIWMTSEHCISLAIGNKEEHAILLCNFFLYFGKKALVLLGTSVLEGHVAYVVTQETNEYLLWNPSTGQCYKQFDPFCPLKSVDCLFDDRNVWFNIQQNNTPMAVFFDYSKESFWKQLLPKNVQGTKIQSIQPEEIIYFETDKSMVEDLRNRIERTLKSKVMEWRPKHPTHWNRQCTFILRQILPKLEFGIGSFVSSEGDNEFERILQFYWVTGFPIQMPYIDVQSIIDAVYQTGIHSAEFPQTEFALAVYIHPYPNNILSVWVYLASLVQHQ</sequence>
<reference key="1">
    <citation type="journal article" date="2004" name="Nat. Genet.">
        <title>Complete sequencing and characterization of 21,243 full-length human cDNAs.</title>
        <authorList>
            <person name="Ota T."/>
            <person name="Suzuki Y."/>
            <person name="Nishikawa T."/>
            <person name="Otsuki T."/>
            <person name="Sugiyama T."/>
            <person name="Irie R."/>
            <person name="Wakamatsu A."/>
            <person name="Hayashi K."/>
            <person name="Sato H."/>
            <person name="Nagai K."/>
            <person name="Kimura K."/>
            <person name="Makita H."/>
            <person name="Sekine M."/>
            <person name="Obayashi M."/>
            <person name="Nishi T."/>
            <person name="Shibahara T."/>
            <person name="Tanaka T."/>
            <person name="Ishii S."/>
            <person name="Yamamoto J."/>
            <person name="Saito K."/>
            <person name="Kawai Y."/>
            <person name="Isono Y."/>
            <person name="Nakamura Y."/>
            <person name="Nagahari K."/>
            <person name="Murakami K."/>
            <person name="Yasuda T."/>
            <person name="Iwayanagi T."/>
            <person name="Wagatsuma M."/>
            <person name="Shiratori A."/>
            <person name="Sudo H."/>
            <person name="Hosoiri T."/>
            <person name="Kaku Y."/>
            <person name="Kodaira H."/>
            <person name="Kondo H."/>
            <person name="Sugawara M."/>
            <person name="Takahashi M."/>
            <person name="Kanda K."/>
            <person name="Yokoi T."/>
            <person name="Furuya T."/>
            <person name="Kikkawa E."/>
            <person name="Omura Y."/>
            <person name="Abe K."/>
            <person name="Kamihara K."/>
            <person name="Katsuta N."/>
            <person name="Sato K."/>
            <person name="Tanikawa M."/>
            <person name="Yamazaki M."/>
            <person name="Ninomiya K."/>
            <person name="Ishibashi T."/>
            <person name="Yamashita H."/>
            <person name="Murakawa K."/>
            <person name="Fujimori K."/>
            <person name="Tanai H."/>
            <person name="Kimata M."/>
            <person name="Watanabe M."/>
            <person name="Hiraoka S."/>
            <person name="Chiba Y."/>
            <person name="Ishida S."/>
            <person name="Ono Y."/>
            <person name="Takiguchi S."/>
            <person name="Watanabe S."/>
            <person name="Yosida M."/>
            <person name="Hotuta T."/>
            <person name="Kusano J."/>
            <person name="Kanehori K."/>
            <person name="Takahashi-Fujii A."/>
            <person name="Hara H."/>
            <person name="Tanase T.-O."/>
            <person name="Nomura Y."/>
            <person name="Togiya S."/>
            <person name="Komai F."/>
            <person name="Hara R."/>
            <person name="Takeuchi K."/>
            <person name="Arita M."/>
            <person name="Imose N."/>
            <person name="Musashino K."/>
            <person name="Yuuki H."/>
            <person name="Oshima A."/>
            <person name="Sasaki N."/>
            <person name="Aotsuka S."/>
            <person name="Yoshikawa Y."/>
            <person name="Matsunawa H."/>
            <person name="Ichihara T."/>
            <person name="Shiohata N."/>
            <person name="Sano S."/>
            <person name="Moriya S."/>
            <person name="Momiyama H."/>
            <person name="Satoh N."/>
            <person name="Takami S."/>
            <person name="Terashima Y."/>
            <person name="Suzuki O."/>
            <person name="Nakagawa S."/>
            <person name="Senoh A."/>
            <person name="Mizoguchi H."/>
            <person name="Goto Y."/>
            <person name="Shimizu F."/>
            <person name="Wakebe H."/>
            <person name="Hishigaki H."/>
            <person name="Watanabe T."/>
            <person name="Sugiyama A."/>
            <person name="Takemoto M."/>
            <person name="Kawakami B."/>
            <person name="Yamazaki M."/>
            <person name="Watanabe K."/>
            <person name="Kumagai A."/>
            <person name="Itakura S."/>
            <person name="Fukuzumi Y."/>
            <person name="Fujimori Y."/>
            <person name="Komiyama M."/>
            <person name="Tashiro H."/>
            <person name="Tanigami A."/>
            <person name="Fujiwara T."/>
            <person name="Ono T."/>
            <person name="Yamada K."/>
            <person name="Fujii Y."/>
            <person name="Ozaki K."/>
            <person name="Hirao M."/>
            <person name="Ohmori Y."/>
            <person name="Kawabata A."/>
            <person name="Hikiji T."/>
            <person name="Kobatake N."/>
            <person name="Inagaki H."/>
            <person name="Ikema Y."/>
            <person name="Okamoto S."/>
            <person name="Okitani R."/>
            <person name="Kawakami T."/>
            <person name="Noguchi S."/>
            <person name="Itoh T."/>
            <person name="Shigeta K."/>
            <person name="Senba T."/>
            <person name="Matsumura K."/>
            <person name="Nakajima Y."/>
            <person name="Mizuno T."/>
            <person name="Morinaga M."/>
            <person name="Sasaki M."/>
            <person name="Togashi T."/>
            <person name="Oyama M."/>
            <person name="Hata H."/>
            <person name="Watanabe M."/>
            <person name="Komatsu T."/>
            <person name="Mizushima-Sugano J."/>
            <person name="Satoh T."/>
            <person name="Shirai Y."/>
            <person name="Takahashi Y."/>
            <person name="Nakagawa K."/>
            <person name="Okumura K."/>
            <person name="Nagase T."/>
            <person name="Nomura N."/>
            <person name="Kikuchi H."/>
            <person name="Masuho Y."/>
            <person name="Yamashita R."/>
            <person name="Nakai K."/>
            <person name="Yada T."/>
            <person name="Nakamura Y."/>
            <person name="Ohara O."/>
            <person name="Isogai T."/>
            <person name="Sugano S."/>
        </authorList>
    </citation>
    <scope>NUCLEOTIDE SEQUENCE [LARGE SCALE MRNA] (ISOFORMS 3 AND 4)</scope>
    <source>
        <tissue>Testis</tissue>
    </source>
</reference>
<reference key="2">
    <citation type="journal article" date="2004" name="Nature">
        <title>The DNA sequence and comparative analysis of human chromosome 10.</title>
        <authorList>
            <person name="Deloukas P."/>
            <person name="Earthrowl M.E."/>
            <person name="Grafham D.V."/>
            <person name="Rubenfield M."/>
            <person name="French L."/>
            <person name="Steward C.A."/>
            <person name="Sims S.K."/>
            <person name="Jones M.C."/>
            <person name="Searle S."/>
            <person name="Scott C."/>
            <person name="Howe K."/>
            <person name="Hunt S.E."/>
            <person name="Andrews T.D."/>
            <person name="Gilbert J.G.R."/>
            <person name="Swarbreck D."/>
            <person name="Ashurst J.L."/>
            <person name="Taylor A."/>
            <person name="Battles J."/>
            <person name="Bird C.P."/>
            <person name="Ainscough R."/>
            <person name="Almeida J.P."/>
            <person name="Ashwell R.I.S."/>
            <person name="Ambrose K.D."/>
            <person name="Babbage A.K."/>
            <person name="Bagguley C.L."/>
            <person name="Bailey J."/>
            <person name="Banerjee R."/>
            <person name="Bates K."/>
            <person name="Beasley H."/>
            <person name="Bray-Allen S."/>
            <person name="Brown A.J."/>
            <person name="Brown J.Y."/>
            <person name="Burford D.C."/>
            <person name="Burrill W."/>
            <person name="Burton J."/>
            <person name="Cahill P."/>
            <person name="Camire D."/>
            <person name="Carter N.P."/>
            <person name="Chapman J.C."/>
            <person name="Clark S.Y."/>
            <person name="Clarke G."/>
            <person name="Clee C.M."/>
            <person name="Clegg S."/>
            <person name="Corby N."/>
            <person name="Coulson A."/>
            <person name="Dhami P."/>
            <person name="Dutta I."/>
            <person name="Dunn M."/>
            <person name="Faulkner L."/>
            <person name="Frankish A."/>
            <person name="Frankland J.A."/>
            <person name="Garner P."/>
            <person name="Garnett J."/>
            <person name="Gribble S."/>
            <person name="Griffiths C."/>
            <person name="Grocock R."/>
            <person name="Gustafson E."/>
            <person name="Hammond S."/>
            <person name="Harley J.L."/>
            <person name="Hart E."/>
            <person name="Heath P.D."/>
            <person name="Ho T.P."/>
            <person name="Hopkins B."/>
            <person name="Horne J."/>
            <person name="Howden P.J."/>
            <person name="Huckle E."/>
            <person name="Hynds C."/>
            <person name="Johnson C."/>
            <person name="Johnson D."/>
            <person name="Kana A."/>
            <person name="Kay M."/>
            <person name="Kimberley A.M."/>
            <person name="Kershaw J.K."/>
            <person name="Kokkinaki M."/>
            <person name="Laird G.K."/>
            <person name="Lawlor S."/>
            <person name="Lee H.M."/>
            <person name="Leongamornlert D.A."/>
            <person name="Laird G."/>
            <person name="Lloyd C."/>
            <person name="Lloyd D.M."/>
            <person name="Loveland J."/>
            <person name="Lovell J."/>
            <person name="McLaren S."/>
            <person name="McLay K.E."/>
            <person name="McMurray A."/>
            <person name="Mashreghi-Mohammadi M."/>
            <person name="Matthews L."/>
            <person name="Milne S."/>
            <person name="Nickerson T."/>
            <person name="Nguyen M."/>
            <person name="Overton-Larty E."/>
            <person name="Palmer S.A."/>
            <person name="Pearce A.V."/>
            <person name="Peck A.I."/>
            <person name="Pelan S."/>
            <person name="Phillimore B."/>
            <person name="Porter K."/>
            <person name="Rice C.M."/>
            <person name="Rogosin A."/>
            <person name="Ross M.T."/>
            <person name="Sarafidou T."/>
            <person name="Sehra H.K."/>
            <person name="Shownkeen R."/>
            <person name="Skuce C.D."/>
            <person name="Smith M."/>
            <person name="Standring L."/>
            <person name="Sycamore N."/>
            <person name="Tester J."/>
            <person name="Thorpe A."/>
            <person name="Torcasso W."/>
            <person name="Tracey A."/>
            <person name="Tromans A."/>
            <person name="Tsolas J."/>
            <person name="Wall M."/>
            <person name="Walsh J."/>
            <person name="Wang H."/>
            <person name="Weinstock K."/>
            <person name="West A.P."/>
            <person name="Willey D.L."/>
            <person name="Whitehead S.L."/>
            <person name="Wilming L."/>
            <person name="Wray P.W."/>
            <person name="Young L."/>
            <person name="Chen Y."/>
            <person name="Lovering R.C."/>
            <person name="Moschonas N.K."/>
            <person name="Siebert R."/>
            <person name="Fechtel K."/>
            <person name="Bentley D."/>
            <person name="Durbin R.M."/>
            <person name="Hubbard T."/>
            <person name="Doucette-Stamm L."/>
            <person name="Beck S."/>
            <person name="Smith D.R."/>
            <person name="Rogers J."/>
        </authorList>
    </citation>
    <scope>NUCLEOTIDE SEQUENCE [LARGE SCALE GENOMIC DNA]</scope>
</reference>
<reference key="3">
    <citation type="journal article" date="2004" name="Genome Res.">
        <title>The status, quality, and expansion of the NIH full-length cDNA project: the Mammalian Gene Collection (MGC).</title>
        <authorList>
            <consortium name="The MGC Project Team"/>
        </authorList>
    </citation>
    <scope>NUCLEOTIDE SEQUENCE [LARGE SCALE MRNA] (ISOFORM 2)</scope>
    <source>
        <tissue>Brain</tissue>
    </source>
</reference>
<dbReference type="EMBL" id="AK294399">
    <property type="protein sequence ID" value="BAG57652.1"/>
    <property type="molecule type" value="mRNA"/>
</dbReference>
<dbReference type="EMBL" id="AK302377">
    <property type="protein sequence ID" value="BAG63696.1"/>
    <property type="molecule type" value="mRNA"/>
</dbReference>
<dbReference type="EMBL" id="AL356155">
    <property type="status" value="NOT_ANNOTATED_CDS"/>
    <property type="molecule type" value="Genomic_DNA"/>
</dbReference>
<dbReference type="EMBL" id="AL365273">
    <property type="status" value="NOT_ANNOTATED_CDS"/>
    <property type="molecule type" value="Genomic_DNA"/>
</dbReference>
<dbReference type="EMBL" id="AL513355">
    <property type="status" value="NOT_ANNOTATED_CDS"/>
    <property type="molecule type" value="Genomic_DNA"/>
</dbReference>
<dbReference type="EMBL" id="BC075861">
    <property type="protein sequence ID" value="AAH75861.2"/>
    <property type="molecule type" value="mRNA"/>
</dbReference>
<dbReference type="CCDS" id="CCDS41555.1">
    <molecule id="Q6DHV5-1"/>
</dbReference>
<dbReference type="CCDS" id="CCDS53560.1">
    <molecule id="Q6DHV5-2"/>
</dbReference>
<dbReference type="CCDS" id="CCDS58090.1">
    <molecule id="Q6DHV5-4"/>
</dbReference>
<dbReference type="CCDS" id="CCDS91310.1">
    <molecule id="Q6DHV5-5"/>
</dbReference>
<dbReference type="RefSeq" id="NP_001001732.2">
    <molecule id="Q6DHV5-1"/>
    <property type="nucleotide sequence ID" value="NM_001001732.4"/>
</dbReference>
<dbReference type="RefSeq" id="NP_001123918.2">
    <molecule id="Q6DHV5-4"/>
    <property type="nucleotide sequence ID" value="NM_001130446.3"/>
</dbReference>
<dbReference type="RefSeq" id="NP_001153219.1">
    <molecule id="Q6DHV5-2"/>
    <property type="nucleotide sequence ID" value="NM_001159747.2"/>
</dbReference>
<dbReference type="RefSeq" id="NP_001335937.1">
    <molecule id="Q6DHV5-5"/>
    <property type="nucleotide sequence ID" value="NM_001349008.3"/>
</dbReference>
<dbReference type="RefSeq" id="XP_011538097.1">
    <property type="nucleotide sequence ID" value="XM_011539795.2"/>
</dbReference>
<dbReference type="RefSeq" id="XP_024303763.1">
    <molecule id="Q6DHV5-5"/>
    <property type="nucleotide sequence ID" value="XM_024447995.2"/>
</dbReference>
<dbReference type="SMR" id="Q6DHV5"/>
<dbReference type="BioGRID" id="132405">
    <property type="interactions" value="5"/>
</dbReference>
<dbReference type="BioGRID" id="136037">
    <property type="interactions" value="4"/>
</dbReference>
<dbReference type="FunCoup" id="Q6DHV5">
    <property type="interactions" value="24"/>
</dbReference>
<dbReference type="IntAct" id="Q6DHV5">
    <property type="interactions" value="1"/>
</dbReference>
<dbReference type="STRING" id="9606.ENSP00000386988"/>
<dbReference type="iPTMnet" id="Q6DHV5"/>
<dbReference type="PhosphoSitePlus" id="Q6DHV5"/>
<dbReference type="SwissPalm" id="Q6DHV5"/>
<dbReference type="BioMuta" id="CC2D2B"/>
<dbReference type="DMDM" id="109821270"/>
<dbReference type="MassIVE" id="Q6DHV5"/>
<dbReference type="PaxDb" id="9606-ENSP00000473658"/>
<dbReference type="PeptideAtlas" id="Q6DHV5"/>
<dbReference type="Antibodypedia" id="49561">
    <property type="antibodies" value="27 antibodies from 11 providers"/>
</dbReference>
<dbReference type="DNASU" id="387707"/>
<dbReference type="Ensembl" id="ENST00000344386.3">
    <molecule id="Q6DHV5-1"/>
    <property type="protein sequence ID" value="ENSP00000343747.3"/>
    <property type="gene ID" value="ENSG00000188649.16"/>
</dbReference>
<dbReference type="Ensembl" id="ENST00000410012.6">
    <molecule id="Q6DHV5-2"/>
    <property type="protein sequence ID" value="ENSP00000386988.2"/>
    <property type="gene ID" value="ENSG00000188649.16"/>
</dbReference>
<dbReference type="Ensembl" id="ENST00000423344.6">
    <molecule id="Q6DHV5-4"/>
    <property type="protein sequence ID" value="ENSP00000411850.2"/>
    <property type="gene ID" value="ENSG00000188649.16"/>
</dbReference>
<dbReference type="Ensembl" id="ENST00000646931.3">
    <molecule id="Q6DHV5-5"/>
    <property type="protein sequence ID" value="ENSP00000496666.2"/>
    <property type="gene ID" value="ENSG00000188649.16"/>
</dbReference>
<dbReference type="GeneID" id="387707"/>
<dbReference type="KEGG" id="hsa:387707"/>
<dbReference type="MANE-Select" id="ENST00000646931.3">
    <property type="protein sequence ID" value="ENSP00000496666.2"/>
    <property type="RefSeq nucleotide sequence ID" value="NM_001349008.3"/>
    <property type="RefSeq protein sequence ID" value="NP_001335937.1"/>
</dbReference>
<dbReference type="UCSC" id="uc001kll.4">
    <molecule id="Q6DHV5-5"/>
    <property type="organism name" value="human"/>
</dbReference>
<dbReference type="AGR" id="HGNC:31666"/>
<dbReference type="CTD" id="387707"/>
<dbReference type="DisGeNET" id="387707"/>
<dbReference type="GeneCards" id="CC2D2B"/>
<dbReference type="HGNC" id="HGNC:31666">
    <property type="gene designation" value="CC2D2B"/>
</dbReference>
<dbReference type="HPA" id="ENSG00000188649">
    <property type="expression patterns" value="Tissue enhanced (testis)"/>
</dbReference>
<dbReference type="neXtProt" id="NX_Q6DHV5"/>
<dbReference type="OpenTargets" id="ENSG00000188649"/>
<dbReference type="PharmGKB" id="PA162381273"/>
<dbReference type="VEuPathDB" id="HostDB:ENSG00000188649"/>
<dbReference type="eggNOG" id="KOG3639">
    <property type="taxonomic scope" value="Eukaryota"/>
</dbReference>
<dbReference type="GeneTree" id="ENSGT00940000156590"/>
<dbReference type="HOGENOM" id="CLU_020606_0_0_1"/>
<dbReference type="InParanoid" id="Q6DHV5"/>
<dbReference type="OMA" id="IYWPETI"/>
<dbReference type="OrthoDB" id="2162143at2759"/>
<dbReference type="PAN-GO" id="Q6DHV5">
    <property type="GO annotations" value="3 GO annotations based on evolutionary models"/>
</dbReference>
<dbReference type="PhylomeDB" id="Q6DHV5"/>
<dbReference type="TreeFam" id="TF333815"/>
<dbReference type="PathwayCommons" id="Q6DHV5"/>
<dbReference type="SignaLink" id="Q6DHV5"/>
<dbReference type="BioGRID-ORCS" id="387707">
    <property type="hits" value="26 hits in 1152 CRISPR screens"/>
</dbReference>
<dbReference type="ChiTaRS" id="CC2D2B">
    <property type="organism name" value="human"/>
</dbReference>
<dbReference type="GenomeRNAi" id="387707"/>
<dbReference type="Pharos" id="Q6DHV5">
    <property type="development level" value="Tdark"/>
</dbReference>
<dbReference type="PRO" id="PR:Q6DHV5"/>
<dbReference type="Proteomes" id="UP000005640">
    <property type="component" value="Chromosome 10"/>
</dbReference>
<dbReference type="RNAct" id="Q6DHV5">
    <property type="molecule type" value="protein"/>
</dbReference>
<dbReference type="Bgee" id="ENSG00000188649">
    <property type="expression patterns" value="Expressed in superficial temporal artery and 134 other cell types or tissues"/>
</dbReference>
<dbReference type="ExpressionAtlas" id="Q6DHV5">
    <property type="expression patterns" value="baseline and differential"/>
</dbReference>
<dbReference type="GO" id="GO:0035869">
    <property type="term" value="C:ciliary transition zone"/>
    <property type="evidence" value="ECO:0000318"/>
    <property type="project" value="GO_Central"/>
</dbReference>
<dbReference type="GO" id="GO:1905515">
    <property type="term" value="P:non-motile cilium assembly"/>
    <property type="evidence" value="ECO:0000318"/>
    <property type="project" value="GO_Central"/>
</dbReference>
<dbReference type="GO" id="GO:1904491">
    <property type="term" value="P:protein localization to ciliary transition zone"/>
    <property type="evidence" value="ECO:0000318"/>
    <property type="project" value="GO_Central"/>
</dbReference>
<dbReference type="Gene3D" id="2.60.40.150">
    <property type="entry name" value="C2 domain"/>
    <property type="match status" value="1"/>
</dbReference>
<dbReference type="InterPro" id="IPR000008">
    <property type="entry name" value="C2_dom"/>
</dbReference>
<dbReference type="InterPro" id="IPR035892">
    <property type="entry name" value="C2_domain_sf"/>
</dbReference>
<dbReference type="InterPro" id="IPR028928">
    <property type="entry name" value="CC2D2AN-C2"/>
</dbReference>
<dbReference type="InterPro" id="IPR056288">
    <property type="entry name" value="CEP76_C"/>
</dbReference>
<dbReference type="InterPro" id="IPR056290">
    <property type="entry name" value="CEPT76/DRC7_peptidase-like_dom"/>
</dbReference>
<dbReference type="InterPro" id="IPR041510">
    <property type="entry name" value="DUF5523"/>
</dbReference>
<dbReference type="InterPro" id="IPR052434">
    <property type="entry name" value="Tectonic-like_complex_comp"/>
</dbReference>
<dbReference type="PANTHER" id="PTHR20837">
    <property type="entry name" value="CENTROSOMAL PROTEIN-RELATED"/>
    <property type="match status" value="1"/>
</dbReference>
<dbReference type="PANTHER" id="PTHR20837:SF2">
    <property type="entry name" value="PROTEIN CC2D2B"/>
    <property type="match status" value="1"/>
</dbReference>
<dbReference type="Pfam" id="PF15625">
    <property type="entry name" value="CC2D2AN-C2"/>
    <property type="match status" value="1"/>
</dbReference>
<dbReference type="Pfam" id="PF24652">
    <property type="entry name" value="CEP76_C"/>
    <property type="match status" value="1"/>
</dbReference>
<dbReference type="Pfam" id="PF24656">
    <property type="entry name" value="CEPT76_peptidase"/>
    <property type="match status" value="1"/>
</dbReference>
<dbReference type="Pfam" id="PF17661">
    <property type="entry name" value="DUF5523"/>
    <property type="match status" value="1"/>
</dbReference>
<dbReference type="SMART" id="SM00239">
    <property type="entry name" value="C2"/>
    <property type="match status" value="1"/>
</dbReference>
<dbReference type="SUPFAM" id="SSF49562">
    <property type="entry name" value="C2 domain (Calcium/lipid-binding domain, CaLB)"/>
    <property type="match status" value="1"/>
</dbReference>
<accession>Q6DHV5</accession>
<accession>A0A1B0GVB6</accession>
<accession>A0A2R8Y8B5</accession>
<accession>A2A3E9</accession>
<accession>A6NCD4</accession>
<accession>B1AMZ2</accession>
<accession>B4DG41</accession>
<accession>B4DYD4</accession>
<accession>E9PCC3</accession>
<accession>Q5VUS0</accession>
<name>C2D2B_HUMAN</name>
<keyword id="KW-0025">Alternative splicing</keyword>
<keyword id="KW-1267">Proteomics identification</keyword>
<keyword id="KW-1185">Reference proteome</keyword>
<evidence type="ECO:0000305" key="1"/>
<evidence type="ECO:0000312" key="2">
    <source>
        <dbReference type="HGNC" id="HGNC:31666"/>
    </source>
</evidence>
<comment type="alternative products">
    <event type="alternative splicing"/>
    <isoform>
        <id>Q6DHV5-5</id>
        <name>1</name>
        <sequence type="displayed"/>
    </isoform>
    <isoform>
        <id>Q6DHV5-1</id>
        <name>2</name>
        <sequence type="described" ref="VSP_060523 VSP_060524 VSP_060525"/>
    </isoform>
    <isoform>
        <id>Q6DHV5-2</id>
        <name>3</name>
        <sequence type="described" ref="VSP_060523 VSP_060524"/>
    </isoform>
    <isoform>
        <id>Q6DHV5-4</id>
        <name>4</name>
        <sequence type="described" ref="VSP_058929 VSP_058932 VSP_058933"/>
    </isoform>
</comment>
<gene>
    <name evidence="2" type="primary">CC2D2B</name>
    <name evidence="2" type="synonym">C10orf130</name>
    <name evidence="2" type="synonym">C10orf131</name>
</gene>
<organism>
    <name type="scientific">Homo sapiens</name>
    <name type="common">Human</name>
    <dbReference type="NCBI Taxonomy" id="9606"/>
    <lineage>
        <taxon>Eukaryota</taxon>
        <taxon>Metazoa</taxon>
        <taxon>Chordata</taxon>
        <taxon>Craniata</taxon>
        <taxon>Vertebrata</taxon>
        <taxon>Euteleostomi</taxon>
        <taxon>Mammalia</taxon>
        <taxon>Eutheria</taxon>
        <taxon>Euarchontoglires</taxon>
        <taxon>Primates</taxon>
        <taxon>Haplorrhini</taxon>
        <taxon>Catarrhini</taxon>
        <taxon>Hominidae</taxon>
        <taxon>Homo</taxon>
    </lineage>
</organism>
<feature type="chain" id="PRO_0000244089" description="Protein CC2D2B">
    <location>
        <begin position="1"/>
        <end position="1437"/>
    </location>
</feature>
<feature type="splice variant" id="VSP_060523" description="In isoform 2 and isoform 3.">
    <location>
        <begin position="1"/>
        <end position="975"/>
    </location>
</feature>
<feature type="splice variant" id="VSP_058929" description="In isoform 4.">
    <original>MKKSQREDIFKK</original>
    <variation>MGVQ</variation>
    <location>
        <begin position="1"/>
        <end position="12"/>
    </location>
</feature>
<feature type="splice variant" id="VSP_058932" description="In isoform 4.">
    <original>VVNQRK</original>
    <variation>GNILSQ</variation>
    <location>
        <begin position="179"/>
        <end position="184"/>
    </location>
</feature>
<feature type="splice variant" id="VSP_058933" description="In isoform 4.">
    <location>
        <begin position="185"/>
        <end position="1437"/>
    </location>
</feature>
<feature type="splice variant" id="VSP_060524" description="In isoform 2 and isoform 3.">
    <original>EISGTFQVTIPPVLLGYTWSNTYVFPKEDSNEQNLKECTFLNIFATIEPQISYVTCNPTLDK</original>
    <variation>E</variation>
    <location>
        <begin position="1015"/>
        <end position="1076"/>
    </location>
</feature>
<feature type="splice variant" id="VSP_060525" description="In isoform 2.">
    <location>
        <begin position="1297"/>
        <end position="1375"/>
    </location>
</feature>
<feature type="sequence variant" id="VAR_050697" description="In dbSNP:rs17383738.">
    <original>N</original>
    <variation>D</variation>
    <location>
        <position position="1100"/>
    </location>
</feature>
<feature type="sequence variant" id="VAR_050698" description="In dbSNP:rs9943393.">
    <original>Y</original>
    <variation>H</variation>
    <location>
        <position position="1273"/>
    </location>
</feature>
<feature type="sequence variant" id="VAR_050699" description="In dbSNP:rs1336459.">
    <original>Q</original>
    <variation>L</variation>
    <location>
        <position position="1437"/>
    </location>
</feature>
<feature type="sequence conflict" description="In Ref. 1; BAG57652." evidence="1" ref="1">
    <original>S</original>
    <variation>P</variation>
    <location sequence="Q6DHV5-2">
        <position position="33"/>
    </location>
</feature>
<proteinExistence type="evidence at protein level"/>
<protein>
    <recommendedName>
        <fullName evidence="1">Protein CC2D2B</fullName>
    </recommendedName>
</protein>